<reference key="1">
    <citation type="journal article" date="1992" name="Neuroscience">
        <title>Molecular cloning of rat trkC and distribution of cells expressing messenger RNAs for members of the trk family in the rat central nervous system.</title>
        <authorList>
            <person name="Merlio J.P."/>
            <person name="Ernfors P."/>
            <person name="Jaber M."/>
            <person name="Persson H."/>
        </authorList>
    </citation>
    <scope>NUCLEOTIDE SEQUENCE [MRNA] (ISOFORM TRKC)</scope>
</reference>
<reference key="2">
    <citation type="journal article" date="1993" name="Neuron">
        <title>Alternative forms of rat TrkC with different functional capabilities.</title>
        <authorList>
            <person name="Valenzuela D.M."/>
            <person name="Maisonpierre P.C."/>
            <person name="Glass D.J."/>
            <person name="Rojas E."/>
            <person name="Nunez L."/>
            <person name="Kong Y."/>
            <person name="Gies D.R."/>
            <person name="Stitt T.N."/>
            <person name="Ip N.Y."/>
            <person name="Yancopoulos G.D."/>
        </authorList>
    </citation>
    <scope>NUCLEOTIDE SEQUENCE [MRNA]</scope>
    <scope>ALTERNATIVE SPLICING</scope>
    <scope>FUNCTION</scope>
    <source>
        <strain>Sprague-Dawley</strain>
        <tissue>Brain</tissue>
    </source>
</reference>
<reference key="3">
    <citation type="journal article" date="1993" name="Neuron">
        <title>The rat trkC locus encodes multiple neurogenic receptors that exhibit differential response to neurotrophin-3 in PC12 cells.</title>
        <authorList>
            <person name="Tsoulfas P."/>
            <person name="Soppet D."/>
            <person name="Escandon E."/>
            <person name="Tessarollo L."/>
            <person name="Mendoza-Ramirez J.-L."/>
            <person name="Rosenthal A."/>
            <person name="Nikolics K."/>
            <person name="Parada L.F."/>
        </authorList>
    </citation>
    <scope>NUCLEOTIDE SEQUENCE [MRNA]</scope>
    <scope>ALTERNATIVE SPLICING</scope>
    <scope>FUNCTION</scope>
    <source>
        <tissue>Brain cortex</tissue>
        <tissue>Hippocampus</tissue>
    </source>
</reference>
<reference key="4">
    <citation type="journal article" date="1998" name="Neuron">
        <title>Identification and characterization of novel substrates of Trk receptors in developing neurons.</title>
        <authorList>
            <person name="Qian X."/>
            <person name="Riccio A."/>
            <person name="Zhang Y."/>
            <person name="Ginty D.D."/>
        </authorList>
    </citation>
    <scope>INTERACTION WITH SH2B2</scope>
</reference>
<reference key="5">
    <citation type="journal article" date="2003" name="J. Biol. Chem.">
        <title>Association of the atypical protein kinase C-interacting protein p62/ZIP with nerve growth factor receptor TrkA regulates receptor trafficking and Erk5 signaling.</title>
        <authorList>
            <person name="Geetha T."/>
            <person name="Wooten M.W."/>
        </authorList>
    </citation>
    <scope>INTERACTION WITH SQSTM1</scope>
</reference>
<reference key="6">
    <citation type="journal article" date="2004" name="EMBO J.">
        <title>A unique pathway for sustained neurotrophin signaling through an ankyrin-rich membrane-spanning protein.</title>
        <authorList>
            <person name="Arevalo J.C."/>
            <person name="Yano H."/>
            <person name="Teng K.K."/>
            <person name="Chao M.V."/>
        </authorList>
    </citation>
    <scope>INTERACTION WITH KIDINS220</scope>
</reference>
<reference key="7">
    <citation type="journal article" date="2007" name="Biochim. Biophys. Acta">
        <title>PTPsigma binds and dephosphorylates neurotrophin receptors and can suppress NGF-dependent neurite outgrowth from sensory neurons.</title>
        <authorList>
            <person name="Faux C."/>
            <person name="Hawadle M."/>
            <person name="Nixon J."/>
            <person name="Wallace A."/>
            <person name="Lee S."/>
            <person name="Murray S."/>
            <person name="Stoker A."/>
        </authorList>
    </citation>
    <scope>INTERACTION WITH PTPRS</scope>
</reference>
<reference key="8">
    <citation type="journal article" date="2011" name="J. Neurosci.">
        <title>JIP3 mediates TrkB axonal anterograde transport and enhances BDNF signaling by directly bridging TrkB with kinesin-1.</title>
        <authorList>
            <person name="Huang S.H."/>
            <person name="Duan S."/>
            <person name="Sun T."/>
            <person name="Wang J."/>
            <person name="Zhao L."/>
            <person name="Geng Z."/>
            <person name="Yan J."/>
            <person name="Sun H.J."/>
            <person name="Chen Z.Y."/>
        </authorList>
    </citation>
    <scope>INTERACTION WITH MAPK8IP3</scope>
</reference>
<organism>
    <name type="scientific">Rattus norvegicus</name>
    <name type="common">Rat</name>
    <dbReference type="NCBI Taxonomy" id="10116"/>
    <lineage>
        <taxon>Eukaryota</taxon>
        <taxon>Metazoa</taxon>
        <taxon>Chordata</taxon>
        <taxon>Craniata</taxon>
        <taxon>Vertebrata</taxon>
        <taxon>Euteleostomi</taxon>
        <taxon>Mammalia</taxon>
        <taxon>Eutheria</taxon>
        <taxon>Euarchontoglires</taxon>
        <taxon>Glires</taxon>
        <taxon>Rodentia</taxon>
        <taxon>Myomorpha</taxon>
        <taxon>Muroidea</taxon>
        <taxon>Muridae</taxon>
        <taxon>Murinae</taxon>
        <taxon>Rattus</taxon>
    </lineage>
</organism>
<protein>
    <recommendedName>
        <fullName>NT-3 growth factor receptor</fullName>
        <ecNumber>2.7.10.1</ecNumber>
    </recommendedName>
    <alternativeName>
        <fullName>GP145-TrkC</fullName>
        <shortName>Trk-C</shortName>
    </alternativeName>
    <alternativeName>
        <fullName>Neurotrophic tyrosine kinase receptor type 3</fullName>
    </alternativeName>
    <alternativeName>
        <fullName>TrkC tyrosine kinase</fullName>
    </alternativeName>
</protein>
<dbReference type="EC" id="2.7.10.1"/>
<dbReference type="EMBL" id="L03813">
    <property type="protein sequence ID" value="AAA42285.1"/>
    <property type="molecule type" value="mRNA"/>
</dbReference>
<dbReference type="EMBL" id="L14445">
    <property type="protein sequence ID" value="AAA42282.1"/>
    <property type="molecule type" value="mRNA"/>
</dbReference>
<dbReference type="EMBL" id="L14446">
    <property type="protein sequence ID" value="AAA42283.1"/>
    <property type="molecule type" value="mRNA"/>
</dbReference>
<dbReference type="EMBL" id="L14447">
    <property type="protein sequence ID" value="AAA42284.1"/>
    <property type="molecule type" value="mRNA"/>
</dbReference>
<dbReference type="EMBL" id="S60953">
    <property type="protein sequence ID" value="AAB26714.2"/>
    <property type="molecule type" value="mRNA"/>
</dbReference>
<dbReference type="EMBL" id="S62924">
    <property type="protein sequence ID" value="AAB26716.2"/>
    <property type="molecule type" value="mRNA"/>
</dbReference>
<dbReference type="EMBL" id="S62933">
    <property type="protein sequence ID" value="AAB26715.2"/>
    <property type="molecule type" value="mRNA"/>
</dbReference>
<dbReference type="RefSeq" id="NP_001257584.1">
    <molecule id="Q03351-3"/>
    <property type="nucleotide sequence ID" value="NM_001270655.1"/>
</dbReference>
<dbReference type="RefSeq" id="NP_001257585.1">
    <molecule id="Q03351-1"/>
    <property type="nucleotide sequence ID" value="NM_001270656.1"/>
</dbReference>
<dbReference type="RefSeq" id="NP_062121.1">
    <molecule id="Q03351-2"/>
    <property type="nucleotide sequence ID" value="NM_019248.2"/>
</dbReference>
<dbReference type="RefSeq" id="XP_008757735.1">
    <molecule id="Q03351-5"/>
    <property type="nucleotide sequence ID" value="XM_008759513.4"/>
</dbReference>
<dbReference type="RefSeq" id="XP_017444550.1">
    <property type="nucleotide sequence ID" value="XM_017589061.1"/>
</dbReference>
<dbReference type="RefSeq" id="XP_063143774.1">
    <molecule id="Q03351-4"/>
    <property type="nucleotide sequence ID" value="XM_063287704.1"/>
</dbReference>
<dbReference type="RefSeq" id="XP_063143787.1">
    <molecule id="Q03351-5"/>
    <property type="nucleotide sequence ID" value="XM_063287717.1"/>
</dbReference>
<dbReference type="SMR" id="Q03351"/>
<dbReference type="BioGRID" id="248241">
    <property type="interactions" value="7"/>
</dbReference>
<dbReference type="DIP" id="DIP-5718N"/>
<dbReference type="FunCoup" id="Q03351">
    <property type="interactions" value="1477"/>
</dbReference>
<dbReference type="IntAct" id="Q03351">
    <property type="interactions" value="4"/>
</dbReference>
<dbReference type="MINT" id="Q03351"/>
<dbReference type="STRING" id="10116.ENSRNOP00000044402"/>
<dbReference type="GlyCosmos" id="Q03351">
    <property type="glycosylation" value="14 sites, No reported glycans"/>
</dbReference>
<dbReference type="GlyGen" id="Q03351">
    <property type="glycosylation" value="15 sites"/>
</dbReference>
<dbReference type="iPTMnet" id="Q03351"/>
<dbReference type="PhosphoSitePlus" id="Q03351"/>
<dbReference type="PaxDb" id="10116-ENSRNOP00000044402"/>
<dbReference type="Ensembl" id="ENSRNOT00000025536.6">
    <molecule id="Q03351-7"/>
    <property type="protein sequence ID" value="ENSRNOP00000025536.4"/>
    <property type="gene ID" value="ENSRNOG00000018674.9"/>
</dbReference>
<dbReference type="Ensembl" id="ENSRNOT00000041839.4">
    <molecule id="Q03351-2"/>
    <property type="protein sequence ID" value="ENSRNOP00000046059.1"/>
    <property type="gene ID" value="ENSRNOG00000018674.9"/>
</dbReference>
<dbReference type="Ensembl" id="ENSRNOT00000045165.4">
    <molecule id="Q03351-3"/>
    <property type="protein sequence ID" value="ENSRNOP00000049463.1"/>
    <property type="gene ID" value="ENSRNOG00000018674.9"/>
</dbReference>
<dbReference type="Ensembl" id="ENSRNOT00000114826.1">
    <molecule id="Q03351-8"/>
    <property type="protein sequence ID" value="ENSRNOP00000096233.1"/>
    <property type="gene ID" value="ENSRNOG00000018674.9"/>
</dbReference>
<dbReference type="GeneID" id="29613"/>
<dbReference type="KEGG" id="rno:29613"/>
<dbReference type="UCSC" id="RGD:3214">
    <molecule id="Q03351-1"/>
    <property type="organism name" value="rat"/>
</dbReference>
<dbReference type="AGR" id="RGD:3214"/>
<dbReference type="CTD" id="4916"/>
<dbReference type="RGD" id="3214">
    <property type="gene designation" value="Ntrk3"/>
</dbReference>
<dbReference type="VEuPathDB" id="HostDB:ENSRNOG00000018674"/>
<dbReference type="eggNOG" id="KOG1026">
    <property type="taxonomic scope" value="Eukaryota"/>
</dbReference>
<dbReference type="GeneTree" id="ENSGT00940000155645"/>
<dbReference type="HOGENOM" id="CLU_000288_74_1_1"/>
<dbReference type="InParanoid" id="Q03351"/>
<dbReference type="PhylomeDB" id="Q03351"/>
<dbReference type="TreeFam" id="TF106465"/>
<dbReference type="BRENDA" id="2.7.10.1">
    <property type="organism ID" value="5301"/>
</dbReference>
<dbReference type="Reactome" id="R-RNO-1257604">
    <property type="pathway name" value="PIP3 activates AKT signaling"/>
</dbReference>
<dbReference type="Reactome" id="R-RNO-388844">
    <property type="pathway name" value="Receptor-type tyrosine-protein phosphatases"/>
</dbReference>
<dbReference type="Reactome" id="R-RNO-6811558">
    <property type="pathway name" value="PI5P, PP2A and IER3 Regulate PI3K/AKT Signaling"/>
</dbReference>
<dbReference type="Reactome" id="R-RNO-9034013">
    <property type="pathway name" value="NTF3 activates NTRK3 signaling"/>
</dbReference>
<dbReference type="Reactome" id="R-RNO-9034793">
    <property type="pathway name" value="Activated NTRK3 signals through PLCG1"/>
</dbReference>
<dbReference type="Reactome" id="R-RNO-9603381">
    <property type="pathway name" value="Activated NTRK3 signals through PI3K"/>
</dbReference>
<dbReference type="PRO" id="PR:Q03351"/>
<dbReference type="Proteomes" id="UP000002494">
    <property type="component" value="Chromosome 1"/>
</dbReference>
<dbReference type="Bgee" id="ENSRNOG00000018674">
    <property type="expression patterns" value="Expressed in frontal cortex and 18 other cell types or tissues"/>
</dbReference>
<dbReference type="ExpressionAtlas" id="Q03351">
    <property type="expression patterns" value="baseline and differential"/>
</dbReference>
<dbReference type="GO" id="GO:0030424">
    <property type="term" value="C:axon"/>
    <property type="evidence" value="ECO:0000318"/>
    <property type="project" value="GO_Central"/>
</dbReference>
<dbReference type="GO" id="GO:0005737">
    <property type="term" value="C:cytoplasm"/>
    <property type="evidence" value="ECO:0000266"/>
    <property type="project" value="RGD"/>
</dbReference>
<dbReference type="GO" id="GO:0098978">
    <property type="term" value="C:glutamatergic synapse"/>
    <property type="evidence" value="ECO:0000314"/>
    <property type="project" value="SynGO"/>
</dbReference>
<dbReference type="GO" id="GO:0000139">
    <property type="term" value="C:Golgi membrane"/>
    <property type="evidence" value="ECO:0000304"/>
    <property type="project" value="Reactome"/>
</dbReference>
<dbReference type="GO" id="GO:0005886">
    <property type="term" value="C:plasma membrane"/>
    <property type="evidence" value="ECO:0000318"/>
    <property type="project" value="GO_Central"/>
</dbReference>
<dbReference type="GO" id="GO:0045211">
    <property type="term" value="C:postsynaptic membrane"/>
    <property type="evidence" value="ECO:0000314"/>
    <property type="project" value="SynGO"/>
</dbReference>
<dbReference type="GO" id="GO:0043235">
    <property type="term" value="C:receptor complex"/>
    <property type="evidence" value="ECO:0000266"/>
    <property type="project" value="RGD"/>
</dbReference>
<dbReference type="GO" id="GO:0005524">
    <property type="term" value="F:ATP binding"/>
    <property type="evidence" value="ECO:0007669"/>
    <property type="project" value="UniProtKB-KW"/>
</dbReference>
<dbReference type="GO" id="GO:0005004">
    <property type="term" value="F:GPI-linked ephrin receptor activity"/>
    <property type="evidence" value="ECO:0000314"/>
    <property type="project" value="BHF-UCL"/>
</dbReference>
<dbReference type="GO" id="GO:0043121">
    <property type="term" value="F:neurotrophin binding"/>
    <property type="evidence" value="ECO:0000318"/>
    <property type="project" value="GO_Central"/>
</dbReference>
<dbReference type="GO" id="GO:0005030">
    <property type="term" value="F:neurotrophin receptor activity"/>
    <property type="evidence" value="ECO:0000266"/>
    <property type="project" value="RGD"/>
</dbReference>
<dbReference type="GO" id="GO:0002039">
    <property type="term" value="F:p53 binding"/>
    <property type="evidence" value="ECO:0000266"/>
    <property type="project" value="RGD"/>
</dbReference>
<dbReference type="GO" id="GO:0004675">
    <property type="term" value="F:transmembrane receptor protein serine/threonine kinase activity"/>
    <property type="evidence" value="ECO:0000304"/>
    <property type="project" value="Reactome"/>
</dbReference>
<dbReference type="GO" id="GO:0004714">
    <property type="term" value="F:transmembrane receptor protein tyrosine kinase activity"/>
    <property type="evidence" value="ECO:0000318"/>
    <property type="project" value="GO_Central"/>
</dbReference>
<dbReference type="GO" id="GO:0048677">
    <property type="term" value="P:axon extension involved in regeneration"/>
    <property type="evidence" value="ECO:0000266"/>
    <property type="project" value="RGD"/>
</dbReference>
<dbReference type="GO" id="GO:0007169">
    <property type="term" value="P:cell surface receptor protein tyrosine kinase signaling pathway"/>
    <property type="evidence" value="ECO:0000266"/>
    <property type="project" value="RGD"/>
</dbReference>
<dbReference type="GO" id="GO:1990090">
    <property type="term" value="P:cellular response to nerve growth factor stimulus"/>
    <property type="evidence" value="ECO:0000318"/>
    <property type="project" value="GO_Central"/>
</dbReference>
<dbReference type="GO" id="GO:0071300">
    <property type="term" value="P:cellular response to retinoic acid"/>
    <property type="evidence" value="ECO:0000270"/>
    <property type="project" value="RGD"/>
</dbReference>
<dbReference type="GO" id="GO:0007623">
    <property type="term" value="P:circadian rhythm"/>
    <property type="evidence" value="ECO:0000266"/>
    <property type="project" value="RGD"/>
</dbReference>
<dbReference type="GO" id="GO:0090102">
    <property type="term" value="P:cochlea development"/>
    <property type="evidence" value="ECO:0000270"/>
    <property type="project" value="RGD"/>
</dbReference>
<dbReference type="GO" id="GO:0007507">
    <property type="term" value="P:heart development"/>
    <property type="evidence" value="ECO:0000250"/>
    <property type="project" value="UniProtKB"/>
</dbReference>
<dbReference type="GO" id="GO:0070306">
    <property type="term" value="P:lens fiber cell differentiation"/>
    <property type="evidence" value="ECO:0000266"/>
    <property type="project" value="RGD"/>
</dbReference>
<dbReference type="GO" id="GO:0042490">
    <property type="term" value="P:mechanoreceptor differentiation"/>
    <property type="evidence" value="ECO:0000266"/>
    <property type="project" value="RGD"/>
</dbReference>
<dbReference type="GO" id="GO:0022011">
    <property type="term" value="P:myelination in peripheral nervous system"/>
    <property type="evidence" value="ECO:0000266"/>
    <property type="project" value="RGD"/>
</dbReference>
<dbReference type="GO" id="GO:0048712">
    <property type="term" value="P:negative regulation of astrocyte differentiation"/>
    <property type="evidence" value="ECO:0000315"/>
    <property type="project" value="RGD"/>
</dbReference>
<dbReference type="GO" id="GO:0048665">
    <property type="term" value="P:neuron fate specification"/>
    <property type="evidence" value="ECO:0000315"/>
    <property type="project" value="RGD"/>
</dbReference>
<dbReference type="GO" id="GO:0001764">
    <property type="term" value="P:neuron migration"/>
    <property type="evidence" value="ECO:0000315"/>
    <property type="project" value="RGD"/>
</dbReference>
<dbReference type="GO" id="GO:0019227">
    <property type="term" value="P:neuronal action potential propagation"/>
    <property type="evidence" value="ECO:0000266"/>
    <property type="project" value="RGD"/>
</dbReference>
<dbReference type="GO" id="GO:0043065">
    <property type="term" value="P:positive regulation of apoptotic process"/>
    <property type="evidence" value="ECO:0000266"/>
    <property type="project" value="RGD"/>
</dbReference>
<dbReference type="GO" id="GO:0048691">
    <property type="term" value="P:positive regulation of axon extension involved in regeneration"/>
    <property type="evidence" value="ECO:0000266"/>
    <property type="project" value="RGD"/>
</dbReference>
<dbReference type="GO" id="GO:0030335">
    <property type="term" value="P:positive regulation of cell migration"/>
    <property type="evidence" value="ECO:0000266"/>
    <property type="project" value="RGD"/>
</dbReference>
<dbReference type="GO" id="GO:0008284">
    <property type="term" value="P:positive regulation of cell population proliferation"/>
    <property type="evidence" value="ECO:0000266"/>
    <property type="project" value="RGD"/>
</dbReference>
<dbReference type="GO" id="GO:0010628">
    <property type="term" value="P:positive regulation of gene expression"/>
    <property type="evidence" value="ECO:0000266"/>
    <property type="project" value="RGD"/>
</dbReference>
<dbReference type="GO" id="GO:0043410">
    <property type="term" value="P:positive regulation of MAPK cascade"/>
    <property type="evidence" value="ECO:0000266"/>
    <property type="project" value="RGD"/>
</dbReference>
<dbReference type="GO" id="GO:0010976">
    <property type="term" value="P:positive regulation of neuron projection development"/>
    <property type="evidence" value="ECO:0000314"/>
    <property type="project" value="RGD"/>
</dbReference>
<dbReference type="GO" id="GO:0051897">
    <property type="term" value="P:positive regulation of phosphatidylinositol 3-kinase/protein kinase B signal transduction"/>
    <property type="evidence" value="ECO:0000266"/>
    <property type="project" value="RGD"/>
</dbReference>
<dbReference type="GO" id="GO:0050927">
    <property type="term" value="P:positive regulation of positive chemotaxis"/>
    <property type="evidence" value="ECO:0000266"/>
    <property type="project" value="RGD"/>
</dbReference>
<dbReference type="GO" id="GO:0051965">
    <property type="term" value="P:positive regulation of synapse assembly"/>
    <property type="evidence" value="ECO:0000266"/>
    <property type="project" value="RGD"/>
</dbReference>
<dbReference type="GO" id="GO:0097107">
    <property type="term" value="P:postsynaptic density assembly"/>
    <property type="evidence" value="ECO:0000314"/>
    <property type="project" value="SynGO"/>
</dbReference>
<dbReference type="GO" id="GO:2000177">
    <property type="term" value="P:regulation of neural precursor cell proliferation"/>
    <property type="evidence" value="ECO:0000315"/>
    <property type="project" value="RGD"/>
</dbReference>
<dbReference type="GO" id="GO:1905606">
    <property type="term" value="P:regulation of presynapse assembly"/>
    <property type="evidence" value="ECO:0000314"/>
    <property type="project" value="SynGO"/>
</dbReference>
<dbReference type="GO" id="GO:0048678">
    <property type="term" value="P:response to axon injury"/>
    <property type="evidence" value="ECO:0000270"/>
    <property type="project" value="RGD"/>
</dbReference>
<dbReference type="GO" id="GO:0051412">
    <property type="term" value="P:response to corticosterone"/>
    <property type="evidence" value="ECO:0000270"/>
    <property type="project" value="RGD"/>
</dbReference>
<dbReference type="GO" id="GO:0045471">
    <property type="term" value="P:response to ethanol"/>
    <property type="evidence" value="ECO:0000270"/>
    <property type="project" value="RGD"/>
</dbReference>
<dbReference type="CDD" id="cd04971">
    <property type="entry name" value="IgI_TrKABC_d5"/>
    <property type="match status" value="1"/>
</dbReference>
<dbReference type="CDD" id="cd05094">
    <property type="entry name" value="PTKc_TrkC"/>
    <property type="match status" value="1"/>
</dbReference>
<dbReference type="FunFam" id="2.60.40.10:FF:000251">
    <property type="entry name" value="Tyrosine-protein kinase receptor"/>
    <property type="match status" value="1"/>
</dbReference>
<dbReference type="FunFam" id="2.60.40.10:FF:000265">
    <property type="entry name" value="Tyrosine-protein kinase receptor"/>
    <property type="match status" value="1"/>
</dbReference>
<dbReference type="FunFam" id="3.30.200.20:FF:000033">
    <property type="entry name" value="Tyrosine-protein kinase receptor"/>
    <property type="match status" value="1"/>
</dbReference>
<dbReference type="FunFam" id="3.80.10.10:FF:000035">
    <property type="entry name" value="Tyrosine-protein kinase receptor"/>
    <property type="match status" value="1"/>
</dbReference>
<dbReference type="Gene3D" id="2.60.40.10">
    <property type="entry name" value="Immunoglobulins"/>
    <property type="match status" value="2"/>
</dbReference>
<dbReference type="Gene3D" id="3.30.200.20">
    <property type="entry name" value="Phosphorylase Kinase, domain 1"/>
    <property type="match status" value="1"/>
</dbReference>
<dbReference type="Gene3D" id="3.80.10.10">
    <property type="entry name" value="Ribonuclease Inhibitor"/>
    <property type="match status" value="1"/>
</dbReference>
<dbReference type="Gene3D" id="1.10.510.10">
    <property type="entry name" value="Transferase(Phosphotransferase) domain 1"/>
    <property type="match status" value="1"/>
</dbReference>
<dbReference type="InterPro" id="IPR000483">
    <property type="entry name" value="Cys-rich_flank_reg_C"/>
</dbReference>
<dbReference type="InterPro" id="IPR007110">
    <property type="entry name" value="Ig-like_dom"/>
</dbReference>
<dbReference type="InterPro" id="IPR036179">
    <property type="entry name" value="Ig-like_dom_sf"/>
</dbReference>
<dbReference type="InterPro" id="IPR013783">
    <property type="entry name" value="Ig-like_fold"/>
</dbReference>
<dbReference type="InterPro" id="IPR013098">
    <property type="entry name" value="Ig_I-set"/>
</dbReference>
<dbReference type="InterPro" id="IPR003599">
    <property type="entry name" value="Ig_sub"/>
</dbReference>
<dbReference type="InterPro" id="IPR013151">
    <property type="entry name" value="Immunoglobulin_dom"/>
</dbReference>
<dbReference type="InterPro" id="IPR011009">
    <property type="entry name" value="Kinase-like_dom_sf"/>
</dbReference>
<dbReference type="InterPro" id="IPR001611">
    <property type="entry name" value="Leu-rich_rpt"/>
</dbReference>
<dbReference type="InterPro" id="IPR032675">
    <property type="entry name" value="LRR_dom_sf"/>
</dbReference>
<dbReference type="InterPro" id="IPR000372">
    <property type="entry name" value="LRRNT"/>
</dbReference>
<dbReference type="InterPro" id="IPR020777">
    <property type="entry name" value="NTRK"/>
</dbReference>
<dbReference type="InterPro" id="IPR020446">
    <property type="entry name" value="NTRK3"/>
</dbReference>
<dbReference type="InterPro" id="IPR031635">
    <property type="entry name" value="NTRK_LRRCT"/>
</dbReference>
<dbReference type="InterPro" id="IPR000719">
    <property type="entry name" value="Prot_kinase_dom"/>
</dbReference>
<dbReference type="InterPro" id="IPR017441">
    <property type="entry name" value="Protein_kinase_ATP_BS"/>
</dbReference>
<dbReference type="InterPro" id="IPR050122">
    <property type="entry name" value="RTK"/>
</dbReference>
<dbReference type="InterPro" id="IPR001245">
    <property type="entry name" value="Ser-Thr/Tyr_kinase_cat_dom"/>
</dbReference>
<dbReference type="InterPro" id="IPR008266">
    <property type="entry name" value="Tyr_kinase_AS"/>
</dbReference>
<dbReference type="InterPro" id="IPR020635">
    <property type="entry name" value="Tyr_kinase_cat_dom"/>
</dbReference>
<dbReference type="InterPro" id="IPR002011">
    <property type="entry name" value="Tyr_kinase_rcpt_2_CS"/>
</dbReference>
<dbReference type="PANTHER" id="PTHR24416:SF66">
    <property type="entry name" value="NT-3 GROWTH FACTOR RECEPTOR"/>
    <property type="match status" value="1"/>
</dbReference>
<dbReference type="PANTHER" id="PTHR24416">
    <property type="entry name" value="TYROSINE-PROTEIN KINASE RECEPTOR"/>
    <property type="match status" value="1"/>
</dbReference>
<dbReference type="Pfam" id="PF07679">
    <property type="entry name" value="I-set"/>
    <property type="match status" value="1"/>
</dbReference>
<dbReference type="Pfam" id="PF00047">
    <property type="entry name" value="ig"/>
    <property type="match status" value="1"/>
</dbReference>
<dbReference type="Pfam" id="PF13855">
    <property type="entry name" value="LRR_8"/>
    <property type="match status" value="1"/>
</dbReference>
<dbReference type="Pfam" id="PF16920">
    <property type="entry name" value="LRRCT_2"/>
    <property type="match status" value="1"/>
</dbReference>
<dbReference type="Pfam" id="PF01462">
    <property type="entry name" value="LRRNT"/>
    <property type="match status" value="1"/>
</dbReference>
<dbReference type="Pfam" id="PF07714">
    <property type="entry name" value="PK_Tyr_Ser-Thr"/>
    <property type="match status" value="2"/>
</dbReference>
<dbReference type="PRINTS" id="PR01939">
    <property type="entry name" value="NTKRECEPTOR"/>
</dbReference>
<dbReference type="PRINTS" id="PR01942">
    <property type="entry name" value="NTKRECEPTOR3"/>
</dbReference>
<dbReference type="PRINTS" id="PR00109">
    <property type="entry name" value="TYRKINASE"/>
</dbReference>
<dbReference type="SMART" id="SM00409">
    <property type="entry name" value="IG"/>
    <property type="match status" value="1"/>
</dbReference>
<dbReference type="SMART" id="SM00082">
    <property type="entry name" value="LRRCT"/>
    <property type="match status" value="1"/>
</dbReference>
<dbReference type="SMART" id="SM00013">
    <property type="entry name" value="LRRNT"/>
    <property type="match status" value="1"/>
</dbReference>
<dbReference type="SMART" id="SM00219">
    <property type="entry name" value="TyrKc"/>
    <property type="match status" value="1"/>
</dbReference>
<dbReference type="SUPFAM" id="SSF48726">
    <property type="entry name" value="Immunoglobulin"/>
    <property type="match status" value="2"/>
</dbReference>
<dbReference type="SUPFAM" id="SSF52058">
    <property type="entry name" value="L domain-like"/>
    <property type="match status" value="1"/>
</dbReference>
<dbReference type="SUPFAM" id="SSF56112">
    <property type="entry name" value="Protein kinase-like (PK-like)"/>
    <property type="match status" value="1"/>
</dbReference>
<dbReference type="PROSITE" id="PS50835">
    <property type="entry name" value="IG_LIKE"/>
    <property type="match status" value="1"/>
</dbReference>
<dbReference type="PROSITE" id="PS51450">
    <property type="entry name" value="LRR"/>
    <property type="match status" value="1"/>
</dbReference>
<dbReference type="PROSITE" id="PS00107">
    <property type="entry name" value="PROTEIN_KINASE_ATP"/>
    <property type="match status" value="1"/>
</dbReference>
<dbReference type="PROSITE" id="PS50011">
    <property type="entry name" value="PROTEIN_KINASE_DOM"/>
    <property type="match status" value="1"/>
</dbReference>
<dbReference type="PROSITE" id="PS00109">
    <property type="entry name" value="PROTEIN_KINASE_TYR"/>
    <property type="match status" value="1"/>
</dbReference>
<dbReference type="PROSITE" id="PS00239">
    <property type="entry name" value="RECEPTOR_TYR_KIN_II"/>
    <property type="match status" value="1"/>
</dbReference>
<name>NTRK3_RAT</name>
<gene>
    <name type="primary">Ntrk3</name>
    <name type="synonym">Trkc</name>
</gene>
<evidence type="ECO:0000250" key="1"/>
<evidence type="ECO:0000250" key="2">
    <source>
        <dbReference type="UniProtKB" id="P04629"/>
    </source>
</evidence>
<evidence type="ECO:0000250" key="3">
    <source>
        <dbReference type="UniProtKB" id="Q16288"/>
    </source>
</evidence>
<evidence type="ECO:0000250" key="4">
    <source>
        <dbReference type="UniProtKB" id="Q6VNS1"/>
    </source>
</evidence>
<evidence type="ECO:0000250" key="5">
    <source>
        <dbReference type="UniProtKB" id="Q91044"/>
    </source>
</evidence>
<evidence type="ECO:0000255" key="6"/>
<evidence type="ECO:0000255" key="7">
    <source>
        <dbReference type="PROSITE-ProRule" id="PRU00114"/>
    </source>
</evidence>
<evidence type="ECO:0000255" key="8">
    <source>
        <dbReference type="PROSITE-ProRule" id="PRU00159"/>
    </source>
</evidence>
<evidence type="ECO:0000255" key="9">
    <source>
        <dbReference type="PROSITE-ProRule" id="PRU10028"/>
    </source>
</evidence>
<evidence type="ECO:0000269" key="10">
    <source>
    </source>
</evidence>
<evidence type="ECO:0000269" key="11">
    <source>
    </source>
</evidence>
<evidence type="ECO:0000269" key="12">
    <source>
    </source>
</evidence>
<evidence type="ECO:0000269" key="13">
    <source>
    </source>
</evidence>
<evidence type="ECO:0000269" key="14">
    <source>
    </source>
</evidence>
<evidence type="ECO:0000269" key="15">
    <source>
    </source>
</evidence>
<evidence type="ECO:0000269" key="16">
    <source>
    </source>
</evidence>
<evidence type="ECO:0000303" key="17">
    <source>
    </source>
</evidence>
<evidence type="ECO:0000305" key="18"/>
<proteinExistence type="evidence at protein level"/>
<comment type="function">
    <text evidence="3 14 15">Receptor tyrosine kinase involved in nervous system and probably heart development. Upon binding of its ligand NTF3/neurotrophin-3, NTRK3 autophosphorylates and activates different signaling pathways, including the phosphatidylinositol 3-kinase/AKT and the MAPK pathways, that control cell survival and differentiation (By similarity). NTRK3 isoforms containing insertions within the kinase domain can autophosphorylate in response to NTF3/neurotrophin-3, but cannot mediate downstream phenotypic responses (PubMed:8494647, PubMed:8494648).</text>
</comment>
<comment type="catalytic activity">
    <reaction evidence="9">
        <text>L-tyrosyl-[protein] + ATP = O-phospho-L-tyrosyl-[protein] + ADP + H(+)</text>
        <dbReference type="Rhea" id="RHEA:10596"/>
        <dbReference type="Rhea" id="RHEA-COMP:10136"/>
        <dbReference type="Rhea" id="RHEA-COMP:20101"/>
        <dbReference type="ChEBI" id="CHEBI:15378"/>
        <dbReference type="ChEBI" id="CHEBI:30616"/>
        <dbReference type="ChEBI" id="CHEBI:46858"/>
        <dbReference type="ChEBI" id="CHEBI:61978"/>
        <dbReference type="ChEBI" id="CHEBI:456216"/>
        <dbReference type="EC" id="2.7.10.1"/>
    </reaction>
</comment>
<comment type="subunit">
    <text evidence="2 10 11 12 13 16">Exists in a dynamic equilibrium between monomeric (low affinity) and dimeric (high affinity) structures (By similarity). Binds SH2B2 (PubMed:9856458). Interacts with SQSTM1 and KIDINS220 (PubMed:12471037, PubMed:15167895). Interacts with PTPRS (PubMed:17967490). Interacts with MAPK8IP3/JIP3 (PubMed:21775604).</text>
</comment>
<comment type="interaction">
    <interactant intactId="EBI-7365348">
        <id>Q03351</id>
    </interactant>
    <interactant intactId="EBI-2008531">
        <id>Q03114</id>
        <label>Cdk5</label>
    </interactant>
    <organismsDiffer>false</organismsDiffer>
    <experiments>2</experiments>
</comment>
<comment type="subcellular location">
    <subcellularLocation>
        <location>Membrane</location>
        <topology>Single-pass type I membrane protein</topology>
    </subcellularLocation>
</comment>
<comment type="alternative products">
    <event type="alternative splicing"/>
    <isoform>
        <id>Q03351-1</id>
        <name>KI39</name>
        <name>TRKC(KI39)</name>
        <name>TRKC-39</name>
        <sequence type="displayed"/>
    </isoform>
    <isoform>
        <id>Q03351-2</id>
        <name>TRKC</name>
        <sequence type="described" ref="VSP_002936 VSP_002937"/>
    </isoform>
    <isoform>
        <id>Q03351-3</id>
        <name>KI14</name>
        <name>TRKC(KI14)</name>
        <name>TRKC-14</name>
        <sequence type="described" ref="VSP_002936"/>
    </isoform>
    <isoform>
        <id>Q03351-4</id>
        <name>KI25</name>
        <name>TRKC-25</name>
        <sequence type="described" ref="VSP_002937"/>
    </isoform>
    <isoform>
        <id>Q03351-5</id>
        <name>IC158</name>
        <name>TRKC(IC158)</name>
        <name>TRKCTK-</name>
        <sequence type="described" ref="VSP_002934 VSP_002935"/>
    </isoform>
    <isoform>
        <id>Q03351-6</id>
        <name>IC143</name>
        <name>TRKC(IC143)</name>
        <sequence type="described" ref="VSP_002932 VSP_002933"/>
    </isoform>
    <isoform>
        <id>Q03351-7</id>
        <name>IC113</name>
        <name>TRKC(IC113)</name>
        <sequence type="described" ref="VSP_002930 VSP_002931"/>
    </isoform>
    <isoform>
        <id>Q03351-8</id>
        <name>IC108</name>
        <name>TRKC(IC108)</name>
        <sequence type="described" ref="VSP_002928 VSP_002929"/>
    </isoform>
    <text>Additional isoforms seem to exist.</text>
</comment>
<comment type="tissue specificity">
    <text>Widely expressed, mainly in the nervous tissue.</text>
</comment>
<comment type="PTM">
    <text>Ligand-mediated auto-phosphorylation.</text>
</comment>
<comment type="similarity">
    <text evidence="8">Belongs to the protein kinase superfamily. Tyr protein kinase family. Insulin receptor subfamily.</text>
</comment>
<accession>Q03351</accession>
<feature type="signal peptide" evidence="1">
    <location>
        <begin position="1"/>
        <end position="31"/>
    </location>
</feature>
<feature type="chain" id="PRO_0000016735" description="NT-3 growth factor receptor">
    <location>
        <begin position="32"/>
        <end position="864"/>
    </location>
</feature>
<feature type="topological domain" description="Extracellular" evidence="6">
    <location>
        <begin position="32"/>
        <end position="429"/>
    </location>
</feature>
<feature type="transmembrane region" description="Helical" evidence="6">
    <location>
        <begin position="430"/>
        <end position="453"/>
    </location>
</feature>
<feature type="topological domain" description="Cytoplasmic" evidence="6">
    <location>
        <begin position="454"/>
        <end position="864"/>
    </location>
</feature>
<feature type="repeat" description="LRR 1">
    <location>
        <begin position="104"/>
        <end position="125"/>
    </location>
</feature>
<feature type="repeat" description="LRR 2">
    <location>
        <begin position="128"/>
        <end position="149"/>
    </location>
</feature>
<feature type="domain" description="LRRCT">
    <location>
        <begin position="160"/>
        <end position="209"/>
    </location>
</feature>
<feature type="domain" description="Ig-like C2-type 1">
    <location>
        <begin position="210"/>
        <end position="300"/>
    </location>
</feature>
<feature type="domain" description="Ig-like C2-type 2">
    <location>
        <begin position="309"/>
        <end position="382"/>
    </location>
</feature>
<feature type="domain" description="Protein kinase" evidence="8">
    <location>
        <begin position="538"/>
        <end position="853"/>
    </location>
</feature>
<feature type="active site" description="Proton acceptor" evidence="8 9">
    <location>
        <position position="679"/>
    </location>
</feature>
<feature type="binding site" evidence="8">
    <location>
        <begin position="544"/>
        <end position="552"/>
    </location>
    <ligand>
        <name>ATP</name>
        <dbReference type="ChEBI" id="CHEBI:30616"/>
    </ligand>
</feature>
<feature type="binding site" evidence="8">
    <location>
        <position position="572"/>
    </location>
    <ligand>
        <name>ATP</name>
        <dbReference type="ChEBI" id="CHEBI:30616"/>
    </ligand>
</feature>
<feature type="site" description="Interaction with SHC1" evidence="1">
    <location>
        <position position="516"/>
    </location>
</feature>
<feature type="site" description="Interaction with PLC-gamma-1" evidence="1">
    <location>
        <position position="859"/>
    </location>
</feature>
<feature type="modified residue" description="Phosphoserine" evidence="4">
    <location>
        <position position="493"/>
    </location>
</feature>
<feature type="modified residue" description="Phosphotyrosine; by autocatalysis" evidence="3">
    <location>
        <position position="516"/>
    </location>
</feature>
<feature type="modified residue" description="Phosphotyrosine; by autocatalysis" evidence="1">
    <location>
        <position position="705"/>
    </location>
</feature>
<feature type="modified residue" description="Phosphotyrosine; by autocatalysis" evidence="1">
    <location>
        <position position="709"/>
    </location>
</feature>
<feature type="modified residue" description="Phosphotyrosine; by autocatalysis" evidence="1">
    <location>
        <position position="710"/>
    </location>
</feature>
<feature type="modified residue" description="Phosphotyrosine; by autocatalysis" evidence="1">
    <location>
        <position position="859"/>
    </location>
</feature>
<feature type="glycosylation site" description="N-linked (GlcNAc...) asparagine" evidence="6">
    <location>
        <position position="68"/>
    </location>
</feature>
<feature type="glycosylation site" description="N-linked (GlcNAc...) asparagine" evidence="6">
    <location>
        <position position="72"/>
    </location>
</feature>
<feature type="glycosylation site" description="N-linked (GlcNAc...) asparagine" evidence="6">
    <location>
        <position position="79"/>
    </location>
</feature>
<feature type="glycosylation site" description="N-linked (GlcNAc...) asparagine" evidence="6">
    <location>
        <position position="133"/>
    </location>
</feature>
<feature type="glycosylation site" description="N-linked (GlcNAc...) asparagine" evidence="6">
    <location>
        <position position="163"/>
    </location>
</feature>
<feature type="glycosylation site" description="N-linked (GlcNAc...) asparagine" evidence="6">
    <location>
        <position position="203"/>
    </location>
</feature>
<feature type="glycosylation site" description="N-linked (GlcNAc...) asparagine" evidence="6">
    <location>
        <position position="218"/>
    </location>
</feature>
<feature type="glycosylation site" description="N-linked (GlcNAc...) asparagine" evidence="6">
    <location>
        <position position="232"/>
    </location>
</feature>
<feature type="glycosylation site" description="N-linked (GlcNAc...) asparagine" evidence="6">
    <location>
        <position position="259"/>
    </location>
</feature>
<feature type="glycosylation site" description="N-linked (GlcNAc...) asparagine" evidence="6">
    <location>
        <position position="267"/>
    </location>
</feature>
<feature type="glycosylation site" description="N-linked (GlcNAc...) asparagine" evidence="6">
    <location>
        <position position="272"/>
    </location>
</feature>
<feature type="glycosylation site" description="N-linked (GlcNAc...) asparagine" evidence="6">
    <location>
        <position position="294"/>
    </location>
</feature>
<feature type="glycosylation site" description="N-linked (GlcNAc...) asparagine" evidence="6">
    <location>
        <position position="375"/>
    </location>
</feature>
<feature type="glycosylation site" description="N-linked (GlcNAc...) asparagine" evidence="6">
    <location>
        <position position="388"/>
    </location>
</feature>
<feature type="disulfide bond" evidence="5">
    <location>
        <begin position="32"/>
        <end position="38"/>
    </location>
</feature>
<feature type="disulfide bond" evidence="5">
    <location>
        <begin position="36"/>
        <end position="45"/>
    </location>
</feature>
<feature type="disulfide bond" evidence="5">
    <location>
        <begin position="164"/>
        <end position="189"/>
    </location>
</feature>
<feature type="disulfide bond" evidence="5">
    <location>
        <begin position="166"/>
        <end position="207"/>
    </location>
</feature>
<feature type="disulfide bond" evidence="5">
    <location>
        <begin position="231"/>
        <end position="284"/>
    </location>
</feature>
<feature type="disulfide bond" evidence="7">
    <location>
        <begin position="320"/>
        <end position="362"/>
    </location>
</feature>
<feature type="splice variant" id="VSP_002934" description="In isoform IC158." evidence="18">
    <original>YVQHIKRRDIVLKRELGEGAFGKVFLAECYNLSPTKDKMLVAVKALKDPTLAARKDFQREAELLTNLQHEHIVKFYGVCGDGDP</original>
    <variation>WVFSNIDNHGILNLKDNRDHLVPSTHYIYEEPEVQSGDVSYPRSHGFREIMLNPISLSGHSKPLNHGIYVEDVNVYFSKGRHGF</variation>
    <location>
        <begin position="529"/>
        <end position="612"/>
    </location>
</feature>
<feature type="splice variant" id="VSP_002932" description="In isoform IC143." evidence="18">
    <original>YVQHIKRRDIVLKRELGEGAFGKVFLAECYNLSPTKDKMLVAVKALKDPTLAARKDFQREAELLTNLQH</original>
    <variation>WVFSNIDNHGILNLKDNRDHLVPSTHYIYEEPEVQSGDVSYPRSHGELLPLTSLYEVKPLPLPVLILKT</variation>
    <location>
        <begin position="529"/>
        <end position="597"/>
    </location>
</feature>
<feature type="splice variant" id="VSP_002930" description="In isoform IC113." evidence="18">
    <original>YVQHIKRRDIVLKRELGEGAFGKVFLAECYNLSPTKDKM</original>
    <variation>CFREIMLNPISLSGHSKPLNHGIYVEDVNVYFSKGRHGF</variation>
    <location>
        <begin position="529"/>
        <end position="567"/>
    </location>
</feature>
<feature type="splice variant" id="VSP_002928" description="In isoform IC108." evidence="18">
    <original>YVQHIKRRDIVLKRELGEGAFGKVFLAECYNLSP</original>
    <variation>FGRIEGFAYGKRYVVMTSVHCHPCWFRFGGLEWL</variation>
    <location>
        <begin position="529"/>
        <end position="562"/>
    </location>
</feature>
<feature type="splice variant" id="VSP_002929" description="In isoform IC108." evidence="18">
    <location>
        <begin position="563"/>
        <end position="864"/>
    </location>
</feature>
<feature type="splice variant" id="VSP_002931" description="In isoform IC113." evidence="18">
    <location>
        <begin position="568"/>
        <end position="864"/>
    </location>
</feature>
<feature type="splice variant" id="VSP_002933" description="In isoform IC143." evidence="18">
    <location>
        <begin position="598"/>
        <end position="864"/>
    </location>
</feature>
<feature type="splice variant" id="VSP_002935" description="In isoform IC158." evidence="18">
    <location>
        <begin position="613"/>
        <end position="864"/>
    </location>
</feature>
<feature type="splice variant" id="VSP_002936" description="In isoform KI14 and isoform TRKC." evidence="17">
    <location>
        <begin position="712"/>
        <end position="736"/>
    </location>
</feature>
<feature type="splice variant" id="VSP_002937" description="In isoform KI25 and isoform TRKC." evidence="17">
    <location>
        <begin position="737"/>
        <end position="750"/>
    </location>
</feature>
<keyword id="KW-0025">Alternative splicing</keyword>
<keyword id="KW-0067">ATP-binding</keyword>
<keyword id="KW-0217">Developmental protein</keyword>
<keyword id="KW-0221">Differentiation</keyword>
<keyword id="KW-1015">Disulfide bond</keyword>
<keyword id="KW-0325">Glycoprotein</keyword>
<keyword id="KW-0393">Immunoglobulin domain</keyword>
<keyword id="KW-0418">Kinase</keyword>
<keyword id="KW-0433">Leucine-rich repeat</keyword>
<keyword id="KW-0472">Membrane</keyword>
<keyword id="KW-0524">Neurogenesis</keyword>
<keyword id="KW-0547">Nucleotide-binding</keyword>
<keyword id="KW-0597">Phosphoprotein</keyword>
<keyword id="KW-0675">Receptor</keyword>
<keyword id="KW-1185">Reference proteome</keyword>
<keyword id="KW-0677">Repeat</keyword>
<keyword id="KW-0732">Signal</keyword>
<keyword id="KW-0808">Transferase</keyword>
<keyword id="KW-0812">Transmembrane</keyword>
<keyword id="KW-1133">Transmembrane helix</keyword>
<keyword id="KW-0829">Tyrosine-protein kinase</keyword>
<sequence length="864" mass="97064">MDVSLCPAKCSFWRIFLLGSVWLDYVGSVLACPANCVCSKTEINCRRPDDGNLFPLLEGQDSGNSNGNASINITDISRNITSIHIENWRGLHTLNAVDMELYTGLQKLTIKNSGLRNIQPRAFAKNPHLRYINLSSNRLTTLSWQLFQTLSLRELRLEQNFFNCSCDIRWMQLWQEQGEARLDSQSLYCISADGSQLPLFRMNISQCDLPEISVSHVNLTVREGDNAVITCNGSGSPLPDVDWIVTGLQSINTHQTNLNWTNVHAINLTLVNVTSEDNGFTLTCIAENVVGMSNASVALTVYYPPRVVSLVEPEVRLEHCIEFVVRGNPTPTLHWLYNGQPLRESKIIHMDYYQEGEVSEGCLLFNKPTHYNNGNYTLIAKNALGTANQTINGHFLKEPFPESTDFFDFESDASPTPPITVTHKPEEDTFGVSIAVGLAAFACVLLVVLFIMINKYGRRSKFGMKGPVAVISGEEDSASPLHHINHGITTPSSLDAGPDTVVIGMTRIPVIENPQYFRQGHNCHKPDTYVQHIKRRDIVLKRELGEGAFGKVFLAECYNLSPTKDKMLVAVKALKDPTLAARKDFQREAELLTNLQHEHIVKFYGVCGDGDPLIMVFEYMKHGDLNKFLRAHGPDAMILVDGQPRQAKGELGLSQMLHIASQIASGMVYLASQHFVHRDLATRNCLVGANLLVKIGDFGMSRDVYSTDYYREGPYQKGPFSVSWQQQRLAASAASTLFNPSGNDFCIWCEVGGHTMLPIRWMPPESIMYRKFTTESDVWSFGVILWEIFTYGKQPWFQLSNTEVIECITQGRVLERPRVCPKEVYDVMLGCWQREPQQRLNIKEIYKILHALGKATPIYLDILG</sequence>